<name>Y1178_MYCTU</name>
<protein>
    <recommendedName>
        <fullName evidence="4">Probable aminotransferase Rv1178</fullName>
        <ecNumber>2.6.1.-</ecNumber>
    </recommendedName>
</protein>
<organism>
    <name type="scientific">Mycobacterium tuberculosis (strain ATCC 25618 / H37Rv)</name>
    <dbReference type="NCBI Taxonomy" id="83332"/>
    <lineage>
        <taxon>Bacteria</taxon>
        <taxon>Bacillati</taxon>
        <taxon>Actinomycetota</taxon>
        <taxon>Actinomycetes</taxon>
        <taxon>Mycobacteriales</taxon>
        <taxon>Mycobacteriaceae</taxon>
        <taxon>Mycobacterium</taxon>
        <taxon>Mycobacterium tuberculosis complex</taxon>
    </lineage>
</organism>
<sequence length="418" mass="43676">MEPLHPDQRRFLRRAGIAGRCGQGWHDRERPASGQGSGAAERGRLSRLGAAPARGGVSASLPVFPWDTLADAKALAGAHPDGIVDLSVGTPVDPVAPLIQEALAAASAAPGYPATAGTARLRESVVAALARRYGITRLTEAAVLPVIGTKELIAWLPTLLGLGGADLVVVPELAYPTYDVGARLAGTRVLRADALTQLGPQSPALLYLNSPSNPTGRVLGVDHLRKVVEWARGRGVLVVSDECYLGLGWDAEPVSVLHPSVCDGDHTGLLAVHSLSKSSSLAGYRAGFVVGDLEIVAELLAVRKHAGMMVPAPVQAAMVAALDDDAHERQQRERYAQRRAALLPALGSAGFAVDYSDAGLYLWATRGEPCRDSAAWLAQRGILVAPGDFYGPGGAQHVRVALTATDERVAAAVGRLTC</sequence>
<proteinExistence type="evidence at protein level"/>
<accession>O50434</accession>
<accession>F2GG09</accession>
<accession>I6XXA7</accession>
<accession>L0T8N2</accession>
<comment type="cofactor">
    <cofactor evidence="1">
        <name>pyridoxal 5'-phosphate</name>
        <dbReference type="ChEBI" id="CHEBI:597326"/>
    </cofactor>
</comment>
<comment type="similarity">
    <text evidence="1">Belongs to the class-I pyridoxal-phosphate-dependent aminotransferase family.</text>
</comment>
<comment type="caution">
    <text evidence="4">It is uncertain whether Met-1 or another residue is the initiator.</text>
</comment>
<comment type="sequence caution" evidence="3">
    <conflict type="erroneous initiation">
        <sequence resource="EMBL-CDS" id="CCP43934"/>
    </conflict>
    <text>Truncated N-terminus.</text>
</comment>
<evidence type="ECO:0000255" key="1">
    <source>
        <dbReference type="RuleBase" id="RU000481"/>
    </source>
</evidence>
<evidence type="ECO:0000256" key="2">
    <source>
        <dbReference type="SAM" id="MobiDB-lite"/>
    </source>
</evidence>
<evidence type="ECO:0000269" key="3">
    <source>
    </source>
</evidence>
<evidence type="ECO:0000305" key="4"/>
<evidence type="ECO:0000312" key="5">
    <source>
        <dbReference type="EMBL" id="CCP43934.1"/>
    </source>
</evidence>
<evidence type="ECO:0007744" key="6">
    <source>
    </source>
</evidence>
<reference evidence="5" key="1">
    <citation type="journal article" date="1998" name="Nature">
        <title>Deciphering the biology of Mycobacterium tuberculosis from the complete genome sequence.</title>
        <authorList>
            <person name="Cole S.T."/>
            <person name="Brosch R."/>
            <person name="Parkhill J."/>
            <person name="Garnier T."/>
            <person name="Churcher C.M."/>
            <person name="Harris D.E."/>
            <person name="Gordon S.V."/>
            <person name="Eiglmeier K."/>
            <person name="Gas S."/>
            <person name="Barry C.E. III"/>
            <person name="Tekaia F."/>
            <person name="Badcock K."/>
            <person name="Basham D."/>
            <person name="Brown D."/>
            <person name="Chillingworth T."/>
            <person name="Connor R."/>
            <person name="Davies R.M."/>
            <person name="Devlin K."/>
            <person name="Feltwell T."/>
            <person name="Gentles S."/>
            <person name="Hamlin N."/>
            <person name="Holroyd S."/>
            <person name="Hornsby T."/>
            <person name="Jagels K."/>
            <person name="Krogh A."/>
            <person name="McLean J."/>
            <person name="Moule S."/>
            <person name="Murphy L.D."/>
            <person name="Oliver S."/>
            <person name="Osborne J."/>
            <person name="Quail M.A."/>
            <person name="Rajandream M.A."/>
            <person name="Rogers J."/>
            <person name="Rutter S."/>
            <person name="Seeger K."/>
            <person name="Skelton S."/>
            <person name="Squares S."/>
            <person name="Squares R."/>
            <person name="Sulston J.E."/>
            <person name="Taylor K."/>
            <person name="Whitehead S."/>
            <person name="Barrell B.G."/>
        </authorList>
    </citation>
    <scope>NUCLEOTIDE SEQUENCE [LARGE SCALE GENOMIC DNA]</scope>
    <source>
        <strain>ATCC 25618 / H37Rv</strain>
    </source>
</reference>
<reference key="2">
    <citation type="journal article" date="2022" name="Genomics">
        <title>Deep N-terminomics of Mycobacterium tuberculosis H37Rv extensively correct annotated encoding genes.</title>
        <authorList>
            <person name="Shi J."/>
            <person name="Meng S."/>
            <person name="Wan L."/>
            <person name="Zhang Z."/>
            <person name="Jiang S."/>
            <person name="Zhu H."/>
            <person name="Dai E."/>
            <person name="Chang L."/>
            <person name="Gao H."/>
            <person name="Wan K."/>
            <person name="Zhang L."/>
            <person name="Zhao X."/>
            <person name="Liu H."/>
            <person name="Lyu Z."/>
            <person name="Zhang Y."/>
            <person name="Xu P."/>
        </authorList>
    </citation>
    <scope>PROTEIN SEQUENCE OF 55-73</scope>
    <scope>SEQUENCE REVISION TO N-TERMINUS</scope>
    <source>
        <strain>H37Rv</strain>
    </source>
</reference>
<reference evidence="6" key="3">
    <citation type="journal article" date="2011" name="Mol. Cell. Proteomics">
        <title>Proteogenomic analysis of Mycobacterium tuberculosis by high resolution mass spectrometry.</title>
        <authorList>
            <person name="Kelkar D.S."/>
            <person name="Kumar D."/>
            <person name="Kumar P."/>
            <person name="Balakrishnan L."/>
            <person name="Muthusamy B."/>
            <person name="Yadav A.K."/>
            <person name="Shrivastava P."/>
            <person name="Marimuthu A."/>
            <person name="Anand S."/>
            <person name="Sundaram H."/>
            <person name="Kingsbury R."/>
            <person name="Harsha H.C."/>
            <person name="Nair B."/>
            <person name="Prasad T.S."/>
            <person name="Chauhan D.S."/>
            <person name="Katoch K."/>
            <person name="Katoch V.M."/>
            <person name="Kumar P."/>
            <person name="Chaerkady R."/>
            <person name="Ramachandran S."/>
            <person name="Dash D."/>
            <person name="Pandey A."/>
        </authorList>
    </citation>
    <scope>IDENTIFICATION BY MASS SPECTROMETRY [LARGE SCALE ANALYSIS]</scope>
    <source>
        <strain>ATCC 25618 / H37Rv</strain>
    </source>
</reference>
<keyword id="KW-0032">Aminotransferase</keyword>
<keyword id="KW-0903">Direct protein sequencing</keyword>
<keyword id="KW-1185">Reference proteome</keyword>
<keyword id="KW-0808">Transferase</keyword>
<gene>
    <name evidence="5" type="ordered locus">Rv1178</name>
</gene>
<feature type="chain" id="PRO_0000456392" description="Probable aminotransferase Rv1178">
    <location>
        <begin position="1"/>
        <end position="418"/>
    </location>
</feature>
<feature type="region of interest" description="Disordered" evidence="2">
    <location>
        <begin position="22"/>
        <end position="42"/>
    </location>
</feature>
<dbReference type="EC" id="2.6.1.-"/>
<dbReference type="EMBL" id="AL123456">
    <property type="protein sequence ID" value="CCP43934.1"/>
    <property type="status" value="ALT_INIT"/>
    <property type="molecule type" value="Genomic_DNA"/>
</dbReference>
<dbReference type="RefSeq" id="NP_215694.1">
    <property type="nucleotide sequence ID" value="NC_000962.3"/>
</dbReference>
<dbReference type="SMR" id="O50434"/>
<dbReference type="STRING" id="83332.Rv1178"/>
<dbReference type="PaxDb" id="83332-Rv1178"/>
<dbReference type="DNASU" id="886031"/>
<dbReference type="GeneID" id="886031"/>
<dbReference type="KEGG" id="mtu:Rv1178"/>
<dbReference type="PATRIC" id="fig|83332.111.peg.1319"/>
<dbReference type="TubercuList" id="Rv1178"/>
<dbReference type="eggNOG" id="COG0436">
    <property type="taxonomic scope" value="Bacteria"/>
</dbReference>
<dbReference type="InParanoid" id="O50434"/>
<dbReference type="OrthoDB" id="9813612at2"/>
<dbReference type="PhylomeDB" id="O50434"/>
<dbReference type="Proteomes" id="UP000001584">
    <property type="component" value="Chromosome"/>
</dbReference>
<dbReference type="GO" id="GO:0005886">
    <property type="term" value="C:plasma membrane"/>
    <property type="evidence" value="ECO:0007005"/>
    <property type="project" value="MTBBASE"/>
</dbReference>
<dbReference type="GO" id="GO:0030170">
    <property type="term" value="F:pyridoxal phosphate binding"/>
    <property type="evidence" value="ECO:0007669"/>
    <property type="project" value="InterPro"/>
</dbReference>
<dbReference type="GO" id="GO:0008483">
    <property type="term" value="F:transaminase activity"/>
    <property type="evidence" value="ECO:0007669"/>
    <property type="project" value="UniProtKB-KW"/>
</dbReference>
<dbReference type="GO" id="GO:0009058">
    <property type="term" value="P:biosynthetic process"/>
    <property type="evidence" value="ECO:0007669"/>
    <property type="project" value="InterPro"/>
</dbReference>
<dbReference type="CDD" id="cd00609">
    <property type="entry name" value="AAT_like"/>
    <property type="match status" value="1"/>
</dbReference>
<dbReference type="FunFam" id="3.40.640.10:FF:000229">
    <property type="entry name" value="Aminotransferase"/>
    <property type="match status" value="1"/>
</dbReference>
<dbReference type="Gene3D" id="3.90.1150.10">
    <property type="entry name" value="Aspartate Aminotransferase, domain 1"/>
    <property type="match status" value="1"/>
</dbReference>
<dbReference type="Gene3D" id="3.40.640.10">
    <property type="entry name" value="Type I PLP-dependent aspartate aminotransferase-like (Major domain)"/>
    <property type="match status" value="1"/>
</dbReference>
<dbReference type="InterPro" id="IPR004839">
    <property type="entry name" value="Aminotransferase_I/II_large"/>
</dbReference>
<dbReference type="InterPro" id="IPR050881">
    <property type="entry name" value="LL-DAP_aminotransferase"/>
</dbReference>
<dbReference type="InterPro" id="IPR004838">
    <property type="entry name" value="NHTrfase_class1_PyrdxlP-BS"/>
</dbReference>
<dbReference type="InterPro" id="IPR019880">
    <property type="entry name" value="OxyQ"/>
</dbReference>
<dbReference type="InterPro" id="IPR015424">
    <property type="entry name" value="PyrdxlP-dep_Trfase"/>
</dbReference>
<dbReference type="InterPro" id="IPR015421">
    <property type="entry name" value="PyrdxlP-dep_Trfase_major"/>
</dbReference>
<dbReference type="InterPro" id="IPR015422">
    <property type="entry name" value="PyrdxlP-dep_Trfase_small"/>
</dbReference>
<dbReference type="NCBIfam" id="TIGR03539">
    <property type="entry name" value="DapC_actino"/>
    <property type="match status" value="1"/>
</dbReference>
<dbReference type="PANTHER" id="PTHR42832">
    <property type="entry name" value="AMINO ACID AMINOTRANSFERASE"/>
    <property type="match status" value="1"/>
</dbReference>
<dbReference type="PANTHER" id="PTHR42832:SF3">
    <property type="entry name" value="L-GLUTAMINE--4-(METHYLSULFANYL)-2-OXOBUTANOATE AMINOTRANSFERASE"/>
    <property type="match status" value="1"/>
</dbReference>
<dbReference type="Pfam" id="PF00155">
    <property type="entry name" value="Aminotran_1_2"/>
    <property type="match status" value="1"/>
</dbReference>
<dbReference type="SUPFAM" id="SSF53383">
    <property type="entry name" value="PLP-dependent transferases"/>
    <property type="match status" value="1"/>
</dbReference>
<dbReference type="PROSITE" id="PS00105">
    <property type="entry name" value="AA_TRANSFER_CLASS_1"/>
    <property type="match status" value="1"/>
</dbReference>